<evidence type="ECO:0000250" key="1"/>
<evidence type="ECO:0000255" key="2"/>
<evidence type="ECO:0000269" key="3">
    <source>
    </source>
</evidence>
<evidence type="ECO:0000269" key="4">
    <source>
    </source>
</evidence>
<evidence type="ECO:0000269" key="5">
    <source>
    </source>
</evidence>
<evidence type="ECO:0000269" key="6">
    <source>
    </source>
</evidence>
<evidence type="ECO:0000305" key="7"/>
<evidence type="ECO:0007829" key="8">
    <source>
        <dbReference type="PDB" id="1EVY"/>
    </source>
</evidence>
<accession>P90551</accession>
<sequence>MSTKQHSAKDELLYLNKAVVFGSGAFGTALAMVLSKKCREVCVWHMNEEEVRLVNEKRENVLFLKGVQLASNITFTSDVEKAYNGAEIILFVIPTQFLRGFFEKSGGNLIAYAKEKQVPVLVCTKGIERSTLKFPAEIIGEFLPSPLLSVLAGPSFAIEVATGVFTCVSIASADINVARRLQRIMSTGDRSFVCWATTDTVGCEVASAVKNVLAIGSGVANGLGMGLNARAALIMRGLLEIRDLTAALGGDGSAVFGLAGLGDLQLTCSSELSRNFTVGKKLGKGLPIEEIQRTSKAVAEGVATADPLMRLAKQLKVKMPLCHQIYEIVYKKKNPRDALADLLSCGLQDEGLPPLFKRSASTPSKL</sequence>
<dbReference type="EC" id="1.1.1.8"/>
<dbReference type="EMBL" id="X89739">
    <property type="protein sequence ID" value="CAA61891.1"/>
    <property type="molecule type" value="Genomic_DNA"/>
</dbReference>
<dbReference type="PDB" id="1EVY">
    <property type="method" value="X-ray"/>
    <property type="resolution" value="1.75 A"/>
    <property type="chains" value="A=1-366"/>
</dbReference>
<dbReference type="PDB" id="1EVZ">
    <property type="method" value="X-ray"/>
    <property type="resolution" value="2.80 A"/>
    <property type="chains" value="A=1-366"/>
</dbReference>
<dbReference type="PDB" id="1JDJ">
    <property type="method" value="X-ray"/>
    <property type="resolution" value="2.20 A"/>
    <property type="chains" value="A=1-366"/>
</dbReference>
<dbReference type="PDB" id="1M66">
    <property type="method" value="X-ray"/>
    <property type="resolution" value="1.90 A"/>
    <property type="chains" value="A=1-366"/>
</dbReference>
<dbReference type="PDB" id="1M67">
    <property type="method" value="X-ray"/>
    <property type="resolution" value="2.50 A"/>
    <property type="chains" value="A=1-366"/>
</dbReference>
<dbReference type="PDB" id="1N1E">
    <property type="method" value="X-ray"/>
    <property type="resolution" value="1.90 A"/>
    <property type="chains" value="A/B=1-366"/>
</dbReference>
<dbReference type="PDB" id="1N1G">
    <property type="method" value="X-ray"/>
    <property type="resolution" value="2.50 A"/>
    <property type="chains" value="A=1-366"/>
</dbReference>
<dbReference type="PDBsum" id="1EVY"/>
<dbReference type="PDBsum" id="1EVZ"/>
<dbReference type="PDBsum" id="1JDJ"/>
<dbReference type="PDBsum" id="1M66"/>
<dbReference type="PDBsum" id="1M67"/>
<dbReference type="PDBsum" id="1N1E"/>
<dbReference type="PDBsum" id="1N1G"/>
<dbReference type="SMR" id="P90551"/>
<dbReference type="VEuPathDB" id="TriTrypDB:LmxM.10.0510"/>
<dbReference type="SABIO-RK" id="P90551"/>
<dbReference type="EvolutionaryTrace" id="P90551"/>
<dbReference type="GO" id="GO:0005829">
    <property type="term" value="C:cytosol"/>
    <property type="evidence" value="ECO:0007669"/>
    <property type="project" value="TreeGrafter"/>
</dbReference>
<dbReference type="GO" id="GO:0020015">
    <property type="term" value="C:glycosome"/>
    <property type="evidence" value="ECO:0007669"/>
    <property type="project" value="UniProtKB-SubCell"/>
</dbReference>
<dbReference type="GO" id="GO:0141152">
    <property type="term" value="F:glycerol-3-phosphate dehydrogenase (NAD+) activity"/>
    <property type="evidence" value="ECO:0007669"/>
    <property type="project" value="UniProtKB-EC"/>
</dbReference>
<dbReference type="GO" id="GO:0051287">
    <property type="term" value="F:NAD binding"/>
    <property type="evidence" value="ECO:0007669"/>
    <property type="project" value="InterPro"/>
</dbReference>
<dbReference type="GO" id="GO:0005975">
    <property type="term" value="P:carbohydrate metabolic process"/>
    <property type="evidence" value="ECO:0007669"/>
    <property type="project" value="InterPro"/>
</dbReference>
<dbReference type="GO" id="GO:0046168">
    <property type="term" value="P:glycerol-3-phosphate catabolic process"/>
    <property type="evidence" value="ECO:0007669"/>
    <property type="project" value="InterPro"/>
</dbReference>
<dbReference type="FunFam" id="1.10.1040.10:FF:000001">
    <property type="entry name" value="Glycerol-3-phosphate dehydrogenase [NAD(P)+]"/>
    <property type="match status" value="1"/>
</dbReference>
<dbReference type="FunFam" id="3.40.50.720:FF:000019">
    <property type="entry name" value="Glycerol-3-phosphate dehydrogenase [NAD(P)+]"/>
    <property type="match status" value="1"/>
</dbReference>
<dbReference type="Gene3D" id="1.10.1040.10">
    <property type="entry name" value="N-(1-d-carboxylethyl)-l-norvaline Dehydrogenase, domain 2"/>
    <property type="match status" value="1"/>
</dbReference>
<dbReference type="Gene3D" id="3.40.50.720">
    <property type="entry name" value="NAD(P)-binding Rossmann-like Domain"/>
    <property type="match status" value="1"/>
</dbReference>
<dbReference type="HAMAP" id="MF_00394">
    <property type="entry name" value="NAD_Glyc3P_dehydrog"/>
    <property type="match status" value="1"/>
</dbReference>
<dbReference type="InterPro" id="IPR008927">
    <property type="entry name" value="6-PGluconate_DH-like_C_sf"/>
</dbReference>
<dbReference type="InterPro" id="IPR013328">
    <property type="entry name" value="6PGD_dom2"/>
</dbReference>
<dbReference type="InterPro" id="IPR006168">
    <property type="entry name" value="G3P_DH_NAD-dep"/>
</dbReference>
<dbReference type="InterPro" id="IPR006109">
    <property type="entry name" value="G3P_DH_NAD-dep_C"/>
</dbReference>
<dbReference type="InterPro" id="IPR011128">
    <property type="entry name" value="G3P_DH_NAD-dep_N"/>
</dbReference>
<dbReference type="InterPro" id="IPR036291">
    <property type="entry name" value="NAD(P)-bd_dom_sf"/>
</dbReference>
<dbReference type="NCBIfam" id="NF000940">
    <property type="entry name" value="PRK00094.1-2"/>
    <property type="match status" value="1"/>
</dbReference>
<dbReference type="NCBIfam" id="NF000942">
    <property type="entry name" value="PRK00094.1-4"/>
    <property type="match status" value="1"/>
</dbReference>
<dbReference type="PANTHER" id="PTHR11728">
    <property type="entry name" value="GLYCEROL-3-PHOSPHATE DEHYDROGENASE"/>
    <property type="match status" value="1"/>
</dbReference>
<dbReference type="PANTHER" id="PTHR11728:SF1">
    <property type="entry name" value="GLYCEROL-3-PHOSPHATE DEHYDROGENASE [NAD(+)] 2, CHLOROPLASTIC"/>
    <property type="match status" value="1"/>
</dbReference>
<dbReference type="Pfam" id="PF07479">
    <property type="entry name" value="NAD_Gly3P_dh_C"/>
    <property type="match status" value="1"/>
</dbReference>
<dbReference type="Pfam" id="PF01210">
    <property type="entry name" value="NAD_Gly3P_dh_N"/>
    <property type="match status" value="1"/>
</dbReference>
<dbReference type="PIRSF" id="PIRSF000114">
    <property type="entry name" value="Glycerol-3-P_dh"/>
    <property type="match status" value="1"/>
</dbReference>
<dbReference type="PRINTS" id="PR00077">
    <property type="entry name" value="GPDHDRGNASE"/>
</dbReference>
<dbReference type="SUPFAM" id="SSF48179">
    <property type="entry name" value="6-phosphogluconate dehydrogenase C-terminal domain-like"/>
    <property type="match status" value="1"/>
</dbReference>
<dbReference type="SUPFAM" id="SSF51735">
    <property type="entry name" value="NAD(P)-binding Rossmann-fold domains"/>
    <property type="match status" value="1"/>
</dbReference>
<dbReference type="PROSITE" id="PS00957">
    <property type="entry name" value="NAD_G3PDH"/>
    <property type="match status" value="1"/>
</dbReference>
<organism>
    <name type="scientific">Leishmania mexicana</name>
    <dbReference type="NCBI Taxonomy" id="5665"/>
    <lineage>
        <taxon>Eukaryota</taxon>
        <taxon>Discoba</taxon>
        <taxon>Euglenozoa</taxon>
        <taxon>Kinetoplastea</taxon>
        <taxon>Metakinetoplastina</taxon>
        <taxon>Trypanosomatida</taxon>
        <taxon>Trypanosomatidae</taxon>
        <taxon>Leishmaniinae</taxon>
        <taxon>Leishmania</taxon>
    </lineage>
</organism>
<reference key="1">
    <citation type="journal article" date="1996" name="Mol. Biochem. Parasitol.">
        <title>Cloning and characterization of the NAD-linked glycerol-3-phosphate dehydrogenases of Trypanosoma brucei brucei and Leishmania mexicana mexicana and expression of the trypanosome enzyme in Escherichia coli.</title>
        <authorList>
            <person name="Kohl L."/>
            <person name="Drmota T."/>
            <person name="Thi C.-D."/>
            <person name="Callens M."/>
            <person name="van Beeumen J."/>
            <person name="Opperdoes F.R."/>
            <person name="Michels P.A.M."/>
        </authorList>
    </citation>
    <scope>NUCLEOTIDE SEQUENCE [GENOMIC DNA]</scope>
    <scope>SUBCELLULAR LOCATION</scope>
</reference>
<reference key="2">
    <citation type="journal article" date="2000" name="Structure">
        <title>A potential target enzyme for trypanocidal drugs revealed by the crystal structure of NAD-dependent glycerol-3-phosphate dehydrogenase from Leishmania mexicana.</title>
        <authorList>
            <person name="Suresh S."/>
            <person name="Turley S."/>
            <person name="Opperdoes F.R."/>
            <person name="Michels P.A.M."/>
            <person name="Hol W.G.J."/>
        </authorList>
    </citation>
    <scope>X-RAY CRYSTALLOGRAPHY (1.75 ANGSTROMS) IN COMPLEX WITH NAD AND SUBSTRATE ANALOG</scope>
    <scope>SUBUNIT</scope>
</reference>
<reference key="3">
    <citation type="journal article" date="2002" name="Chem. Biol.">
        <title>Anomalous differences of light elements in determining precise binding modes of ligands to glycerol-3-phosphate dehydrogenase.</title>
        <authorList>
            <person name="Choe J."/>
            <person name="Suresh S."/>
            <person name="Wisedchaisri G."/>
            <person name="Kennedy K.J."/>
            <person name="Gelb M.H."/>
            <person name="Hol W.G.J."/>
        </authorList>
    </citation>
    <scope>X-RAY CRYSTALLOGRAPHY (1.9 ANGSTROMS) IN COMPLEX WITH NAD ANALOG</scope>
</reference>
<reference key="4">
    <citation type="journal article" date="2003" name="J. Mol. Biol.">
        <title>Leishmania mexicana glycerol-3-phosphate dehydrogenase showed conformational changes upon binding a bi-substrate adduct.</title>
        <authorList>
            <person name="Choe J."/>
            <person name="Guerra D."/>
            <person name="Michels P.A.M."/>
            <person name="Hol W.G.J."/>
        </authorList>
    </citation>
    <scope>X-RAY CRYSTALLOGRAPHY (1.9 ANGSTROMS) IN COMPLEX WITH SUBSTRATE AND NAD</scope>
    <scope>MUTAGENESIS OF LYS-125 AND LYS-210</scope>
</reference>
<protein>
    <recommendedName>
        <fullName>Glycerol-3-phosphate dehydrogenase [NAD(+)], glycosomal</fullName>
        <ecNumber>1.1.1.8</ecNumber>
    </recommendedName>
</protein>
<feature type="chain" id="PRO_0000262292" description="Glycerol-3-phosphate dehydrogenase [NAD(+)], glycosomal">
    <location>
        <begin position="1"/>
        <end position="366"/>
    </location>
</feature>
<feature type="short sequence motif" description="Microbody targeting signal" evidence="2">
    <location>
        <begin position="364"/>
        <end position="366"/>
    </location>
</feature>
<feature type="active site" description="Proton acceptor" evidence="7">
    <location>
        <position position="210"/>
    </location>
</feature>
<feature type="binding site" evidence="3 5">
    <location>
        <begin position="22"/>
        <end position="27"/>
    </location>
    <ligand>
        <name>NAD(+)</name>
        <dbReference type="ChEBI" id="CHEBI:57540"/>
    </ligand>
</feature>
<feature type="binding site" evidence="1">
    <location>
        <position position="97"/>
    </location>
    <ligand>
        <name>NAD(+)</name>
        <dbReference type="ChEBI" id="CHEBI:57540"/>
    </ligand>
</feature>
<feature type="binding site" evidence="3 5">
    <location>
        <position position="125"/>
    </location>
    <ligand>
        <name>NAD(+)</name>
        <dbReference type="ChEBI" id="CHEBI:57540"/>
    </ligand>
</feature>
<feature type="binding site" evidence="5">
    <location>
        <position position="125"/>
    </location>
    <ligand>
        <name>substrate</name>
    </ligand>
</feature>
<feature type="binding site" evidence="3 5">
    <location>
        <position position="157"/>
    </location>
    <ligand>
        <name>NAD(+)</name>
        <dbReference type="ChEBI" id="CHEBI:57540"/>
    </ligand>
</feature>
<feature type="binding site">
    <location>
        <begin position="274"/>
        <end position="275"/>
    </location>
    <ligand>
        <name>substrate</name>
    </ligand>
</feature>
<feature type="binding site" evidence="1">
    <location>
        <position position="274"/>
    </location>
    <ligand>
        <name>NAD(+)</name>
        <dbReference type="ChEBI" id="CHEBI:57540"/>
    </ligand>
</feature>
<feature type="binding site" evidence="3 5">
    <location>
        <position position="298"/>
    </location>
    <ligand>
        <name>NAD(+)</name>
        <dbReference type="ChEBI" id="CHEBI:57540"/>
    </ligand>
</feature>
<feature type="binding site" evidence="3 5">
    <location>
        <position position="300"/>
    </location>
    <ligand>
        <name>NAD(+)</name>
        <dbReference type="ChEBI" id="CHEBI:57540"/>
    </ligand>
</feature>
<feature type="mutagenesis site" description="Loss of activity." evidence="5">
    <original>K</original>
    <variation>A</variation>
    <variation>M</variation>
    <location>
        <position position="125"/>
    </location>
</feature>
<feature type="mutagenesis site" description="Loss of activity." evidence="5">
    <original>K</original>
    <variation>A</variation>
    <variation>M</variation>
    <location>
        <position position="210"/>
    </location>
</feature>
<feature type="strand" evidence="8">
    <location>
        <begin position="15"/>
        <end position="21"/>
    </location>
</feature>
<feature type="helix" evidence="8">
    <location>
        <begin position="25"/>
        <end position="34"/>
    </location>
</feature>
<feature type="turn" evidence="8">
    <location>
        <begin position="35"/>
        <end position="37"/>
    </location>
</feature>
<feature type="strand" evidence="8">
    <location>
        <begin position="38"/>
        <end position="44"/>
    </location>
</feature>
<feature type="helix" evidence="8">
    <location>
        <begin position="48"/>
        <end position="57"/>
    </location>
</feature>
<feature type="turn" evidence="8">
    <location>
        <begin position="61"/>
        <end position="63"/>
    </location>
</feature>
<feature type="strand" evidence="8">
    <location>
        <begin position="73"/>
        <end position="77"/>
    </location>
</feature>
<feature type="helix" evidence="8">
    <location>
        <begin position="79"/>
        <end position="83"/>
    </location>
</feature>
<feature type="strand" evidence="8">
    <location>
        <begin position="87"/>
        <end position="91"/>
    </location>
</feature>
<feature type="helix" evidence="8">
    <location>
        <begin position="95"/>
        <end position="105"/>
    </location>
</feature>
<feature type="helix" evidence="8">
    <location>
        <begin position="107"/>
        <end position="116"/>
    </location>
</feature>
<feature type="strand" evidence="8">
    <location>
        <begin position="120"/>
        <end position="122"/>
    </location>
</feature>
<feature type="turn" evidence="8">
    <location>
        <begin position="129"/>
        <end position="131"/>
    </location>
</feature>
<feature type="helix" evidence="8">
    <location>
        <begin position="135"/>
        <end position="139"/>
    </location>
</feature>
<feature type="turn" evidence="8">
    <location>
        <begin position="140"/>
        <end position="142"/>
    </location>
</feature>
<feature type="helix" evidence="8">
    <location>
        <begin position="145"/>
        <end position="147"/>
    </location>
</feature>
<feature type="strand" evidence="8">
    <location>
        <begin position="148"/>
        <end position="154"/>
    </location>
</feature>
<feature type="helix" evidence="8">
    <location>
        <begin position="157"/>
        <end position="161"/>
    </location>
</feature>
<feature type="strand" evidence="8">
    <location>
        <begin position="166"/>
        <end position="171"/>
    </location>
</feature>
<feature type="helix" evidence="8">
    <location>
        <begin position="175"/>
        <end position="185"/>
    </location>
</feature>
<feature type="strand" evidence="8">
    <location>
        <begin position="190"/>
        <end position="198"/>
    </location>
</feature>
<feature type="helix" evidence="8">
    <location>
        <begin position="200"/>
        <end position="222"/>
    </location>
</feature>
<feature type="helix" evidence="8">
    <location>
        <begin position="227"/>
        <end position="247"/>
    </location>
</feature>
<feature type="turn" evidence="8">
    <location>
        <begin position="253"/>
        <end position="256"/>
    </location>
</feature>
<feature type="turn" evidence="8">
    <location>
        <begin position="258"/>
        <end position="260"/>
    </location>
</feature>
<feature type="helix" evidence="8">
    <location>
        <begin position="261"/>
        <end position="268"/>
    </location>
</feature>
<feature type="helix" evidence="8">
    <location>
        <begin position="274"/>
        <end position="283"/>
    </location>
</feature>
<feature type="helix" evidence="8">
    <location>
        <begin position="288"/>
        <end position="292"/>
    </location>
</feature>
<feature type="helix" evidence="8">
    <location>
        <begin position="300"/>
        <end position="315"/>
    </location>
</feature>
<feature type="helix" evidence="8">
    <location>
        <begin position="320"/>
        <end position="330"/>
    </location>
</feature>
<feature type="helix" evidence="8">
    <location>
        <begin position="335"/>
        <end position="342"/>
    </location>
</feature>
<feature type="helix" evidence="8">
    <location>
        <begin position="343"/>
        <end position="345"/>
    </location>
</feature>
<proteinExistence type="evidence at protein level"/>
<keyword id="KW-0002">3D-structure</keyword>
<keyword id="KW-0327">Glycosome</keyword>
<keyword id="KW-0520">NAD</keyword>
<keyword id="KW-0560">Oxidoreductase</keyword>
<keyword id="KW-0576">Peroxisome</keyword>
<gene>
    <name type="primary">GPD</name>
</gene>
<name>GPDA_LEIME</name>
<comment type="catalytic activity">
    <reaction>
        <text>sn-glycerol 3-phosphate + NAD(+) = dihydroxyacetone phosphate + NADH + H(+)</text>
        <dbReference type="Rhea" id="RHEA:11092"/>
        <dbReference type="ChEBI" id="CHEBI:15378"/>
        <dbReference type="ChEBI" id="CHEBI:57540"/>
        <dbReference type="ChEBI" id="CHEBI:57597"/>
        <dbReference type="ChEBI" id="CHEBI:57642"/>
        <dbReference type="ChEBI" id="CHEBI:57945"/>
        <dbReference type="EC" id="1.1.1.8"/>
    </reaction>
</comment>
<comment type="subunit">
    <text evidence="3 4 5">Homodimer.</text>
</comment>
<comment type="subcellular location">
    <subcellularLocation>
        <location evidence="6">Glycosome</location>
    </subcellularLocation>
</comment>
<comment type="similarity">
    <text evidence="7">Belongs to the NAD-dependent glycerol-3-phosphate dehydrogenase family.</text>
</comment>